<feature type="chain" id="PRO_0000365849" description="ATP synthase subunit c">
    <location>
        <begin position="1"/>
        <end position="72"/>
    </location>
</feature>
<feature type="transmembrane region" description="Helical" evidence="1">
    <location>
        <begin position="1"/>
        <end position="21"/>
    </location>
</feature>
<feature type="transmembrane region" description="Helical" evidence="1">
    <location>
        <begin position="49"/>
        <end position="69"/>
    </location>
</feature>
<feature type="site" description="Reversibly protonated during proton transport" evidence="1">
    <location>
        <position position="56"/>
    </location>
</feature>
<keyword id="KW-0066">ATP synthesis</keyword>
<keyword id="KW-1003">Cell membrane</keyword>
<keyword id="KW-0138">CF(0)</keyword>
<keyword id="KW-0375">Hydrogen ion transport</keyword>
<keyword id="KW-0406">Ion transport</keyword>
<keyword id="KW-0446">Lipid-binding</keyword>
<keyword id="KW-0472">Membrane</keyword>
<keyword id="KW-0812">Transmembrane</keyword>
<keyword id="KW-1133">Transmembrane helix</keyword>
<keyword id="KW-0813">Transport</keyword>
<evidence type="ECO:0000255" key="1">
    <source>
        <dbReference type="HAMAP-Rule" id="MF_01396"/>
    </source>
</evidence>
<name>ATPL_BACAH</name>
<protein>
    <recommendedName>
        <fullName evidence="1">ATP synthase subunit c</fullName>
    </recommendedName>
    <alternativeName>
        <fullName evidence="1">ATP synthase F(0) sector subunit c</fullName>
    </alternativeName>
    <alternativeName>
        <fullName evidence="1">F-type ATPase subunit c</fullName>
        <shortName evidence="1">F-ATPase subunit c</shortName>
    </alternativeName>
    <alternativeName>
        <fullName evidence="1">Lipid-binding protein</fullName>
    </alternativeName>
</protein>
<sequence length="72" mass="7213">MSLGVIAAAIAIGLSALGAGIGNGLIVSRTIEGVARQPELKGALQTIMFIGVALVEALPIIGVVIAFIVMNK</sequence>
<organism>
    <name type="scientific">Bacillus thuringiensis (strain Al Hakam)</name>
    <dbReference type="NCBI Taxonomy" id="412694"/>
    <lineage>
        <taxon>Bacteria</taxon>
        <taxon>Bacillati</taxon>
        <taxon>Bacillota</taxon>
        <taxon>Bacilli</taxon>
        <taxon>Bacillales</taxon>
        <taxon>Bacillaceae</taxon>
        <taxon>Bacillus</taxon>
        <taxon>Bacillus cereus group</taxon>
    </lineage>
</organism>
<gene>
    <name evidence="1" type="primary">atpE</name>
    <name type="ordered locus">BALH_4813</name>
</gene>
<accession>A0RLA0</accession>
<proteinExistence type="inferred from homology"/>
<comment type="function">
    <text evidence="1">F(1)F(0) ATP synthase produces ATP from ADP in the presence of a proton or sodium gradient. F-type ATPases consist of two structural domains, F(1) containing the extramembraneous catalytic core and F(0) containing the membrane proton channel, linked together by a central stalk and a peripheral stalk. During catalysis, ATP synthesis in the catalytic domain of F(1) is coupled via a rotary mechanism of the central stalk subunits to proton translocation.</text>
</comment>
<comment type="function">
    <text evidence="1">Key component of the F(0) channel; it plays a direct role in translocation across the membrane. A homomeric c-ring of between 10-14 subunits forms the central stalk rotor element with the F(1) delta and epsilon subunits.</text>
</comment>
<comment type="subunit">
    <text evidence="1">F-type ATPases have 2 components, F(1) - the catalytic core - and F(0) - the membrane proton channel. F(1) has five subunits: alpha(3), beta(3), gamma(1), delta(1), epsilon(1). F(0) has three main subunits: a(1), b(2) and c(10-14). The alpha and beta chains form an alternating ring which encloses part of the gamma chain. F(1) is attached to F(0) by a central stalk formed by the gamma and epsilon chains, while a peripheral stalk is formed by the delta and b chains.</text>
</comment>
<comment type="subcellular location">
    <subcellularLocation>
        <location evidence="1">Cell membrane</location>
        <topology evidence="1">Multi-pass membrane protein</topology>
    </subcellularLocation>
</comment>
<comment type="similarity">
    <text evidence="1">Belongs to the ATPase C chain family.</text>
</comment>
<dbReference type="EMBL" id="CP000485">
    <property type="protein sequence ID" value="ABK87993.1"/>
    <property type="molecule type" value="Genomic_DNA"/>
</dbReference>
<dbReference type="RefSeq" id="WP_000052064.1">
    <property type="nucleotide sequence ID" value="NC_008600.1"/>
</dbReference>
<dbReference type="SMR" id="A0RLA0"/>
<dbReference type="GeneID" id="93005813"/>
<dbReference type="KEGG" id="btl:BALH_4813"/>
<dbReference type="HOGENOM" id="CLU_148047_1_1_9"/>
<dbReference type="GO" id="GO:0005886">
    <property type="term" value="C:plasma membrane"/>
    <property type="evidence" value="ECO:0007669"/>
    <property type="project" value="UniProtKB-SubCell"/>
</dbReference>
<dbReference type="GO" id="GO:0045259">
    <property type="term" value="C:proton-transporting ATP synthase complex"/>
    <property type="evidence" value="ECO:0007669"/>
    <property type="project" value="UniProtKB-KW"/>
</dbReference>
<dbReference type="GO" id="GO:0033177">
    <property type="term" value="C:proton-transporting two-sector ATPase complex, proton-transporting domain"/>
    <property type="evidence" value="ECO:0007669"/>
    <property type="project" value="InterPro"/>
</dbReference>
<dbReference type="GO" id="GO:0008289">
    <property type="term" value="F:lipid binding"/>
    <property type="evidence" value="ECO:0007669"/>
    <property type="project" value="UniProtKB-KW"/>
</dbReference>
<dbReference type="GO" id="GO:0046933">
    <property type="term" value="F:proton-transporting ATP synthase activity, rotational mechanism"/>
    <property type="evidence" value="ECO:0007669"/>
    <property type="project" value="UniProtKB-UniRule"/>
</dbReference>
<dbReference type="CDD" id="cd18185">
    <property type="entry name" value="ATP-synt_Fo_c_ATPE"/>
    <property type="match status" value="1"/>
</dbReference>
<dbReference type="FunFam" id="1.20.20.10:FF:000004">
    <property type="entry name" value="ATP synthase subunit c"/>
    <property type="match status" value="1"/>
</dbReference>
<dbReference type="Gene3D" id="1.20.20.10">
    <property type="entry name" value="F1F0 ATP synthase subunit C"/>
    <property type="match status" value="1"/>
</dbReference>
<dbReference type="HAMAP" id="MF_01396">
    <property type="entry name" value="ATP_synth_c_bact"/>
    <property type="match status" value="1"/>
</dbReference>
<dbReference type="InterPro" id="IPR005953">
    <property type="entry name" value="ATP_synth_csu_bac/chlpt"/>
</dbReference>
<dbReference type="InterPro" id="IPR000454">
    <property type="entry name" value="ATP_synth_F0_csu"/>
</dbReference>
<dbReference type="InterPro" id="IPR020537">
    <property type="entry name" value="ATP_synth_F0_csu_DDCD_BS"/>
</dbReference>
<dbReference type="InterPro" id="IPR038662">
    <property type="entry name" value="ATP_synth_F0_csu_sf"/>
</dbReference>
<dbReference type="InterPro" id="IPR002379">
    <property type="entry name" value="ATPase_proteolipid_c-like_dom"/>
</dbReference>
<dbReference type="InterPro" id="IPR035921">
    <property type="entry name" value="F/V-ATP_Csub_sf"/>
</dbReference>
<dbReference type="NCBIfam" id="TIGR01260">
    <property type="entry name" value="ATP_synt_c"/>
    <property type="match status" value="1"/>
</dbReference>
<dbReference type="NCBIfam" id="NF005363">
    <property type="entry name" value="PRK06876.1"/>
    <property type="match status" value="1"/>
</dbReference>
<dbReference type="PANTHER" id="PTHR10031">
    <property type="entry name" value="ATP SYNTHASE LIPID-BINDING PROTEIN, MITOCHONDRIAL"/>
    <property type="match status" value="1"/>
</dbReference>
<dbReference type="PANTHER" id="PTHR10031:SF0">
    <property type="entry name" value="ATPASE PROTEIN 9"/>
    <property type="match status" value="1"/>
</dbReference>
<dbReference type="Pfam" id="PF00137">
    <property type="entry name" value="ATP-synt_C"/>
    <property type="match status" value="1"/>
</dbReference>
<dbReference type="PRINTS" id="PR00124">
    <property type="entry name" value="ATPASEC"/>
</dbReference>
<dbReference type="SUPFAM" id="SSF81333">
    <property type="entry name" value="F1F0 ATP synthase subunit C"/>
    <property type="match status" value="1"/>
</dbReference>
<dbReference type="PROSITE" id="PS00605">
    <property type="entry name" value="ATPASE_C"/>
    <property type="match status" value="1"/>
</dbReference>
<reference key="1">
    <citation type="journal article" date="2007" name="J. Bacteriol.">
        <title>The complete genome sequence of Bacillus thuringiensis Al Hakam.</title>
        <authorList>
            <person name="Challacombe J.F."/>
            <person name="Altherr M.R."/>
            <person name="Xie G."/>
            <person name="Bhotika S.S."/>
            <person name="Brown N."/>
            <person name="Bruce D."/>
            <person name="Campbell C.S."/>
            <person name="Campbell M.L."/>
            <person name="Chen J."/>
            <person name="Chertkov O."/>
            <person name="Cleland C."/>
            <person name="Dimitrijevic M."/>
            <person name="Doggett N.A."/>
            <person name="Fawcett J.J."/>
            <person name="Glavina T."/>
            <person name="Goodwin L.A."/>
            <person name="Green L.D."/>
            <person name="Han C.S."/>
            <person name="Hill K.K."/>
            <person name="Hitchcock P."/>
            <person name="Jackson P.J."/>
            <person name="Keim P."/>
            <person name="Kewalramani A.R."/>
            <person name="Longmire J."/>
            <person name="Lucas S."/>
            <person name="Malfatti S."/>
            <person name="Martinez D."/>
            <person name="McMurry K."/>
            <person name="Meincke L.J."/>
            <person name="Misra M."/>
            <person name="Moseman B.L."/>
            <person name="Mundt M."/>
            <person name="Munk A.C."/>
            <person name="Okinaka R.T."/>
            <person name="Parson-Quintana B."/>
            <person name="Reilly L.P."/>
            <person name="Richardson P."/>
            <person name="Robinson D.L."/>
            <person name="Saunders E."/>
            <person name="Tapia R."/>
            <person name="Tesmer J.G."/>
            <person name="Thayer N."/>
            <person name="Thompson L.S."/>
            <person name="Tice H."/>
            <person name="Ticknor L.O."/>
            <person name="Wills P.L."/>
            <person name="Gilna P."/>
            <person name="Brettin T.S."/>
        </authorList>
    </citation>
    <scope>NUCLEOTIDE SEQUENCE [LARGE SCALE GENOMIC DNA]</scope>
    <source>
        <strain>Al Hakam</strain>
    </source>
</reference>